<comment type="subcellular location">
    <subcellularLocation>
        <location evidence="3">Secreted</location>
    </subcellularLocation>
</comment>
<comment type="similarity">
    <text evidence="3">Belongs to the 'GDSL' lipolytic enzyme family.</text>
</comment>
<protein>
    <recommendedName>
        <fullName>GDSL esterase/lipase At3g05180</fullName>
        <ecNumber>3.1.1.-</ecNumber>
    </recommendedName>
    <alternativeName>
        <fullName>Extracellular lipase At3g05180</fullName>
    </alternativeName>
</protein>
<organism>
    <name type="scientific">Arabidopsis thaliana</name>
    <name type="common">Mouse-ear cress</name>
    <dbReference type="NCBI Taxonomy" id="3702"/>
    <lineage>
        <taxon>Eukaryota</taxon>
        <taxon>Viridiplantae</taxon>
        <taxon>Streptophyta</taxon>
        <taxon>Embryophyta</taxon>
        <taxon>Tracheophyta</taxon>
        <taxon>Spermatophyta</taxon>
        <taxon>Magnoliopsida</taxon>
        <taxon>eudicotyledons</taxon>
        <taxon>Gunneridae</taxon>
        <taxon>Pentapetalae</taxon>
        <taxon>rosids</taxon>
        <taxon>malvids</taxon>
        <taxon>Brassicales</taxon>
        <taxon>Brassicaceae</taxon>
        <taxon>Camelineae</taxon>
        <taxon>Arabidopsis</taxon>
    </lineage>
</organism>
<sequence length="379" mass="42344">METLFHTLLRLLLFVAISHTLSPLAGSFRISNDFPAVFNFGDSNSDTGELSSGLGFLPQPSYEITFFRSPTSGRFCNGRLIVDFLMEAIDRPYLRPYLDSISRQTYRRGCNFAAAASTIQKANAASYSPFGFGVQVSQFITFKSKVLQLIQQDEELQRYLPSEYFFSNGLYMFDIGQNDIAGAFYTKTVDQVLALVPIILDIFQDGIKRLYAEGARNYWIHNTGPLGCLAQVVSIFGEDKSKLDEFGCVSDHNQAAKLFNLQLHGLFKKLPQQYPNSRFTYVDIFSIKSDLILNHSKYGFDHSIMVCCGTGGPPLNYDDQVGCGKTARSNGTIITAKPCYDSSKYVNWDGIHYTEAANRFVALHILTGKYSETASSLNL</sequence>
<reference key="1">
    <citation type="journal article" date="2000" name="Nature">
        <title>Sequence and analysis of chromosome 3 of the plant Arabidopsis thaliana.</title>
        <authorList>
            <person name="Salanoubat M."/>
            <person name="Lemcke K."/>
            <person name="Rieger M."/>
            <person name="Ansorge W."/>
            <person name="Unseld M."/>
            <person name="Fartmann B."/>
            <person name="Valle G."/>
            <person name="Bloecker H."/>
            <person name="Perez-Alonso M."/>
            <person name="Obermaier B."/>
            <person name="Delseny M."/>
            <person name="Boutry M."/>
            <person name="Grivell L.A."/>
            <person name="Mache R."/>
            <person name="Puigdomenech P."/>
            <person name="De Simone V."/>
            <person name="Choisne N."/>
            <person name="Artiguenave F."/>
            <person name="Robert C."/>
            <person name="Brottier P."/>
            <person name="Wincker P."/>
            <person name="Cattolico L."/>
            <person name="Weissenbach J."/>
            <person name="Saurin W."/>
            <person name="Quetier F."/>
            <person name="Schaefer M."/>
            <person name="Mueller-Auer S."/>
            <person name="Gabel C."/>
            <person name="Fuchs M."/>
            <person name="Benes V."/>
            <person name="Wurmbach E."/>
            <person name="Drzonek H."/>
            <person name="Erfle H."/>
            <person name="Jordan N."/>
            <person name="Bangert S."/>
            <person name="Wiedelmann R."/>
            <person name="Kranz H."/>
            <person name="Voss H."/>
            <person name="Holland R."/>
            <person name="Brandt P."/>
            <person name="Nyakatura G."/>
            <person name="Vezzi A."/>
            <person name="D'Angelo M."/>
            <person name="Pallavicini A."/>
            <person name="Toppo S."/>
            <person name="Simionati B."/>
            <person name="Conrad A."/>
            <person name="Hornischer K."/>
            <person name="Kauer G."/>
            <person name="Loehnert T.-H."/>
            <person name="Nordsiek G."/>
            <person name="Reichelt J."/>
            <person name="Scharfe M."/>
            <person name="Schoen O."/>
            <person name="Bargues M."/>
            <person name="Terol J."/>
            <person name="Climent J."/>
            <person name="Navarro P."/>
            <person name="Collado C."/>
            <person name="Perez-Perez A."/>
            <person name="Ottenwaelder B."/>
            <person name="Duchemin D."/>
            <person name="Cooke R."/>
            <person name="Laudie M."/>
            <person name="Berger-Llauro C."/>
            <person name="Purnelle B."/>
            <person name="Masuy D."/>
            <person name="de Haan M."/>
            <person name="Maarse A.C."/>
            <person name="Alcaraz J.-P."/>
            <person name="Cottet A."/>
            <person name="Casacuberta E."/>
            <person name="Monfort A."/>
            <person name="Argiriou A."/>
            <person name="Flores M."/>
            <person name="Liguori R."/>
            <person name="Vitale D."/>
            <person name="Mannhaupt G."/>
            <person name="Haase D."/>
            <person name="Schoof H."/>
            <person name="Rudd S."/>
            <person name="Zaccaria P."/>
            <person name="Mewes H.-W."/>
            <person name="Mayer K.F.X."/>
            <person name="Kaul S."/>
            <person name="Town C.D."/>
            <person name="Koo H.L."/>
            <person name="Tallon L.J."/>
            <person name="Jenkins J."/>
            <person name="Rooney T."/>
            <person name="Rizzo M."/>
            <person name="Walts A."/>
            <person name="Utterback T."/>
            <person name="Fujii C.Y."/>
            <person name="Shea T.P."/>
            <person name="Creasy T.H."/>
            <person name="Haas B."/>
            <person name="Maiti R."/>
            <person name="Wu D."/>
            <person name="Peterson J."/>
            <person name="Van Aken S."/>
            <person name="Pai G."/>
            <person name="Militscher J."/>
            <person name="Sellers P."/>
            <person name="Gill J.E."/>
            <person name="Feldblyum T.V."/>
            <person name="Preuss D."/>
            <person name="Lin X."/>
            <person name="Nierman W.C."/>
            <person name="Salzberg S.L."/>
            <person name="White O."/>
            <person name="Venter J.C."/>
            <person name="Fraser C.M."/>
            <person name="Kaneko T."/>
            <person name="Nakamura Y."/>
            <person name="Sato S."/>
            <person name="Kato T."/>
            <person name="Asamizu E."/>
            <person name="Sasamoto S."/>
            <person name="Kimura T."/>
            <person name="Idesawa K."/>
            <person name="Kawashima K."/>
            <person name="Kishida Y."/>
            <person name="Kiyokawa C."/>
            <person name="Kohara M."/>
            <person name="Matsumoto M."/>
            <person name="Matsuno A."/>
            <person name="Muraki A."/>
            <person name="Nakayama S."/>
            <person name="Nakazaki N."/>
            <person name="Shinpo S."/>
            <person name="Takeuchi C."/>
            <person name="Wada T."/>
            <person name="Watanabe A."/>
            <person name="Yamada M."/>
            <person name="Yasuda M."/>
            <person name="Tabata S."/>
        </authorList>
    </citation>
    <scope>NUCLEOTIDE SEQUENCE [LARGE SCALE GENOMIC DNA]</scope>
    <source>
        <strain>cv. Columbia</strain>
    </source>
</reference>
<reference key="2">
    <citation type="journal article" date="2017" name="Plant J.">
        <title>Araport11: a complete reannotation of the Arabidopsis thaliana reference genome.</title>
        <authorList>
            <person name="Cheng C.Y."/>
            <person name="Krishnakumar V."/>
            <person name="Chan A.P."/>
            <person name="Thibaud-Nissen F."/>
            <person name="Schobel S."/>
            <person name="Town C.D."/>
        </authorList>
    </citation>
    <scope>GENOME REANNOTATION</scope>
    <source>
        <strain>cv. Columbia</strain>
    </source>
</reference>
<reference key="3">
    <citation type="journal article" date="2003" name="Science">
        <title>Empirical analysis of transcriptional activity in the Arabidopsis genome.</title>
        <authorList>
            <person name="Yamada K."/>
            <person name="Lim J."/>
            <person name="Dale J.M."/>
            <person name="Chen H."/>
            <person name="Shinn P."/>
            <person name="Palm C.J."/>
            <person name="Southwick A.M."/>
            <person name="Wu H.C."/>
            <person name="Kim C.J."/>
            <person name="Nguyen M."/>
            <person name="Pham P.K."/>
            <person name="Cheuk R.F."/>
            <person name="Karlin-Newmann G."/>
            <person name="Liu S.X."/>
            <person name="Lam B."/>
            <person name="Sakano H."/>
            <person name="Wu T."/>
            <person name="Yu G."/>
            <person name="Miranda M."/>
            <person name="Quach H.L."/>
            <person name="Tripp M."/>
            <person name="Chang C.H."/>
            <person name="Lee J.M."/>
            <person name="Toriumi M.J."/>
            <person name="Chan M.M."/>
            <person name="Tang C.C."/>
            <person name="Onodera C.S."/>
            <person name="Deng J.M."/>
            <person name="Akiyama K."/>
            <person name="Ansari Y."/>
            <person name="Arakawa T."/>
            <person name="Banh J."/>
            <person name="Banno F."/>
            <person name="Bowser L."/>
            <person name="Brooks S.Y."/>
            <person name="Carninci P."/>
            <person name="Chao Q."/>
            <person name="Choy N."/>
            <person name="Enju A."/>
            <person name="Goldsmith A.D."/>
            <person name="Gurjal M."/>
            <person name="Hansen N.F."/>
            <person name="Hayashizaki Y."/>
            <person name="Johnson-Hopson C."/>
            <person name="Hsuan V.W."/>
            <person name="Iida K."/>
            <person name="Karnes M."/>
            <person name="Khan S."/>
            <person name="Koesema E."/>
            <person name="Ishida J."/>
            <person name="Jiang P.X."/>
            <person name="Jones T."/>
            <person name="Kawai J."/>
            <person name="Kamiya A."/>
            <person name="Meyers C."/>
            <person name="Nakajima M."/>
            <person name="Narusaka M."/>
            <person name="Seki M."/>
            <person name="Sakurai T."/>
            <person name="Satou M."/>
            <person name="Tamse R."/>
            <person name="Vaysberg M."/>
            <person name="Wallender E.K."/>
            <person name="Wong C."/>
            <person name="Yamamura Y."/>
            <person name="Yuan S."/>
            <person name="Shinozaki K."/>
            <person name="Davis R.W."/>
            <person name="Theologis A."/>
            <person name="Ecker J.R."/>
        </authorList>
    </citation>
    <scope>NUCLEOTIDE SEQUENCE [LARGE SCALE MRNA]</scope>
    <source>
        <strain>cv. Columbia</strain>
    </source>
</reference>
<reference key="4">
    <citation type="submission" date="2002-03" db="EMBL/GenBank/DDBJ databases">
        <title>Full-length cDNA from Arabidopsis thaliana.</title>
        <authorList>
            <person name="Brover V.V."/>
            <person name="Troukhan M.E."/>
            <person name="Alexandrov N.A."/>
            <person name="Lu Y.-P."/>
            <person name="Flavell R.B."/>
            <person name="Feldmann K.A."/>
        </authorList>
    </citation>
    <scope>NUCLEOTIDE SEQUENCE [LARGE SCALE MRNA]</scope>
</reference>
<reference key="5">
    <citation type="journal article" date="2004" name="Prog. Lipid Res.">
        <title>GDSL family of serine esterases/lipases.</title>
        <authorList>
            <person name="Akoh C.C."/>
            <person name="Lee G.-C."/>
            <person name="Liaw Y.-C."/>
            <person name="Huang T.-H."/>
            <person name="Shaw J.-F."/>
        </authorList>
    </citation>
    <scope>REVIEW</scope>
</reference>
<reference key="6">
    <citation type="journal article" date="2008" name="Pak. J. Biol. Sci.">
        <title>Sequence analysis of GDSL lipase gene family in Arabidopsis thaliana.</title>
        <authorList>
            <person name="Ling H."/>
        </authorList>
    </citation>
    <scope>GENE FAMILY</scope>
</reference>
<proteinExistence type="evidence at transcript level"/>
<dbReference type="EC" id="3.1.1.-"/>
<dbReference type="EMBL" id="AC009177">
    <property type="protein sequence ID" value="AAF27024.1"/>
    <property type="molecule type" value="Genomic_DNA"/>
</dbReference>
<dbReference type="EMBL" id="CP002686">
    <property type="protein sequence ID" value="AEE74201.1"/>
    <property type="molecule type" value="Genomic_DNA"/>
</dbReference>
<dbReference type="EMBL" id="AY056157">
    <property type="protein sequence ID" value="AAL07236.1"/>
    <property type="molecule type" value="mRNA"/>
</dbReference>
<dbReference type="EMBL" id="BT000788">
    <property type="protein sequence ID" value="AAN31927.1"/>
    <property type="molecule type" value="mRNA"/>
</dbReference>
<dbReference type="EMBL" id="AY085661">
    <property type="protein sequence ID" value="AAM62882.1"/>
    <property type="molecule type" value="mRNA"/>
</dbReference>
<dbReference type="RefSeq" id="NP_187169.1">
    <property type="nucleotide sequence ID" value="NM_111391.4"/>
</dbReference>
<dbReference type="SMR" id="Q9MAA1"/>
<dbReference type="FunCoup" id="Q9MAA1">
    <property type="interactions" value="92"/>
</dbReference>
<dbReference type="GlyGen" id="Q9MAA1">
    <property type="glycosylation" value="2 sites"/>
</dbReference>
<dbReference type="PaxDb" id="3702-AT3G05180.1"/>
<dbReference type="ProteomicsDB" id="247097"/>
<dbReference type="EnsemblPlants" id="AT3G05180.1">
    <property type="protein sequence ID" value="AT3G05180.1"/>
    <property type="gene ID" value="AT3G05180"/>
</dbReference>
<dbReference type="GeneID" id="819682"/>
<dbReference type="Gramene" id="AT3G05180.1">
    <property type="protein sequence ID" value="AT3G05180.1"/>
    <property type="gene ID" value="AT3G05180"/>
</dbReference>
<dbReference type="KEGG" id="ath:AT3G05180"/>
<dbReference type="Araport" id="AT3G05180"/>
<dbReference type="TAIR" id="AT3G05180"/>
<dbReference type="eggNOG" id="ENOG502QRTJ">
    <property type="taxonomic scope" value="Eukaryota"/>
</dbReference>
<dbReference type="HOGENOM" id="CLU_015101_2_0_1"/>
<dbReference type="InParanoid" id="Q9MAA1"/>
<dbReference type="OMA" id="GARNYWI"/>
<dbReference type="PhylomeDB" id="Q9MAA1"/>
<dbReference type="BioCyc" id="ARA:AT3G05180-MONOMER"/>
<dbReference type="PRO" id="PR:Q9MAA1"/>
<dbReference type="Proteomes" id="UP000006548">
    <property type="component" value="Chromosome 3"/>
</dbReference>
<dbReference type="ExpressionAtlas" id="Q9MAA1">
    <property type="expression patterns" value="baseline and differential"/>
</dbReference>
<dbReference type="GO" id="GO:0048046">
    <property type="term" value="C:apoplast"/>
    <property type="evidence" value="ECO:0007005"/>
    <property type="project" value="TAIR"/>
</dbReference>
<dbReference type="GO" id="GO:0016788">
    <property type="term" value="F:hydrolase activity, acting on ester bonds"/>
    <property type="evidence" value="ECO:0007669"/>
    <property type="project" value="InterPro"/>
</dbReference>
<dbReference type="GO" id="GO:0016042">
    <property type="term" value="P:lipid catabolic process"/>
    <property type="evidence" value="ECO:0007669"/>
    <property type="project" value="UniProtKB-KW"/>
</dbReference>
<dbReference type="GO" id="GO:0009627">
    <property type="term" value="P:systemic acquired resistance"/>
    <property type="evidence" value="ECO:0000270"/>
    <property type="project" value="TAIR"/>
</dbReference>
<dbReference type="CDD" id="cd01837">
    <property type="entry name" value="SGNH_plant_lipase_like"/>
    <property type="match status" value="1"/>
</dbReference>
<dbReference type="FunFam" id="3.40.50.1110:FF:000108">
    <property type="entry name" value="GDSL esterase/lipase At3g05180"/>
    <property type="match status" value="1"/>
</dbReference>
<dbReference type="Gene3D" id="3.40.50.1110">
    <property type="entry name" value="SGNH hydrolase"/>
    <property type="match status" value="1"/>
</dbReference>
<dbReference type="InterPro" id="IPR001087">
    <property type="entry name" value="GDSL"/>
</dbReference>
<dbReference type="InterPro" id="IPR036514">
    <property type="entry name" value="SGNH_hydro_sf"/>
</dbReference>
<dbReference type="InterPro" id="IPR035669">
    <property type="entry name" value="SGNH_plant_lipase-like"/>
</dbReference>
<dbReference type="PANTHER" id="PTHR22835:SF607">
    <property type="entry name" value="GENOME ASSEMBLY, CHROMOSOME: A05"/>
    <property type="match status" value="1"/>
</dbReference>
<dbReference type="PANTHER" id="PTHR22835">
    <property type="entry name" value="ZINC FINGER FYVE DOMAIN CONTAINING PROTEIN"/>
    <property type="match status" value="1"/>
</dbReference>
<dbReference type="Pfam" id="PF00657">
    <property type="entry name" value="Lipase_GDSL"/>
    <property type="match status" value="1"/>
</dbReference>
<accession>Q9MAA1</accession>
<accession>Q8H143</accession>
<accession>Q8LE24</accession>
<name>GDL49_ARATH</name>
<evidence type="ECO:0000250" key="1"/>
<evidence type="ECO:0000255" key="2"/>
<evidence type="ECO:0000305" key="3"/>
<gene>
    <name type="ordered locus">At3g05180</name>
    <name type="ORF">T12H1.15</name>
</gene>
<feature type="signal peptide" evidence="2">
    <location>
        <begin position="1"/>
        <end position="27"/>
    </location>
</feature>
<feature type="chain" id="PRO_0000367390" description="GDSL esterase/lipase At3g05180">
    <location>
        <begin position="28"/>
        <end position="379"/>
    </location>
</feature>
<feature type="active site" description="Nucleophile" evidence="1">
    <location>
        <position position="43"/>
    </location>
</feature>
<feature type="active site" evidence="1">
    <location>
        <position position="349"/>
    </location>
</feature>
<feature type="active site" evidence="1">
    <location>
        <position position="352"/>
    </location>
</feature>
<feature type="glycosylation site" description="N-linked (GlcNAc...) asparagine" evidence="2">
    <location>
        <position position="294"/>
    </location>
</feature>
<feature type="glycosylation site" description="N-linked (GlcNAc...) asparagine" evidence="2">
    <location>
        <position position="330"/>
    </location>
</feature>
<feature type="sequence conflict" description="In Ref. 4; AAM62882." evidence="3" ref="4">
    <original>V</original>
    <variation>L</variation>
    <location>
        <position position="189"/>
    </location>
</feature>
<feature type="sequence conflict" description="In Ref. 4; AAM62882." evidence="3" ref="4">
    <original>E</original>
    <variation>K</variation>
    <location>
        <position position="238"/>
    </location>
</feature>
<keyword id="KW-0325">Glycoprotein</keyword>
<keyword id="KW-0378">Hydrolase</keyword>
<keyword id="KW-0442">Lipid degradation</keyword>
<keyword id="KW-0443">Lipid metabolism</keyword>
<keyword id="KW-1185">Reference proteome</keyword>
<keyword id="KW-0964">Secreted</keyword>
<keyword id="KW-0732">Signal</keyword>